<sequence>MTSENNNTEFAELKIRDKIFKLPILKASIGQDVIDISKVYSEADCFTYDPGFMSTASCRSTITYIDGDQGILRHRGYDIKDLAEKSDFLEVAYLLIYGELPNNKQYNDFTKKVAHHALVNERLHYLFQTFCSSSHPMAIMLAAVGSLSAFYPDLLNFFKEADYELTAIRMIAKIPTIAAMSYKYSIGQPFVYPDNSLDFTENFLHMMFATPCEKYKVNPVIKNALNKIFILHADHEQNASTSTVRIAGSSGANPFACVSTGIASLWGPAHGGANEAVINMLKEIGSVENIPKYIAKAKDKNDNFRLMGFGHRVYKNYDPRAAVLKETCKEVLKELGQLDNNPLLQIAIELEAIALKDEYFIERKLYPNVDFYSGIIYKAMGIPPQMFTVLFATARTVGWMAQWKEMHEDPEQKISRPRQLYTGQVHREYKTIKER</sequence>
<name>CISY_RICBR</name>
<feature type="chain" id="PRO_0000273146" description="Citrate synthase">
    <location>
        <begin position="1"/>
        <end position="435"/>
    </location>
</feature>
<feature type="active site" evidence="1">
    <location>
        <position position="311"/>
    </location>
</feature>
<feature type="active site" evidence="1">
    <location>
        <position position="370"/>
    </location>
</feature>
<comment type="catalytic activity">
    <reaction evidence="1">
        <text>oxaloacetate + acetyl-CoA + H2O = citrate + CoA + H(+)</text>
        <dbReference type="Rhea" id="RHEA:16845"/>
        <dbReference type="ChEBI" id="CHEBI:15377"/>
        <dbReference type="ChEBI" id="CHEBI:15378"/>
        <dbReference type="ChEBI" id="CHEBI:16452"/>
        <dbReference type="ChEBI" id="CHEBI:16947"/>
        <dbReference type="ChEBI" id="CHEBI:57287"/>
        <dbReference type="ChEBI" id="CHEBI:57288"/>
        <dbReference type="EC" id="2.3.3.16"/>
    </reaction>
</comment>
<comment type="pathway">
    <text>Carbohydrate metabolism; tricarboxylic acid cycle; isocitrate from oxaloacetate: step 1/2.</text>
</comment>
<comment type="miscellaneous">
    <text>Citrate synthase is found in nearly all cells capable of oxidative metabolism.</text>
</comment>
<comment type="similarity">
    <text evidence="2">Belongs to the citrate synthase family.</text>
</comment>
<proteinExistence type="inferred from homology"/>
<protein>
    <recommendedName>
        <fullName>Citrate synthase</fullName>
        <ecNumber>2.3.3.16</ecNumber>
    </recommendedName>
</protein>
<gene>
    <name type="primary">gltA</name>
    <name type="ordered locus">RBE_1325</name>
</gene>
<evidence type="ECO:0000255" key="1">
    <source>
        <dbReference type="PROSITE-ProRule" id="PRU10117"/>
    </source>
</evidence>
<evidence type="ECO:0000305" key="2"/>
<accession>Q1RGV8</accession>
<reference key="1">
    <citation type="journal article" date="2006" name="PLoS Genet.">
        <title>Genome sequence of Rickettsia bellii illuminates the role of amoebae in gene exchanges between intracellular pathogens.</title>
        <authorList>
            <person name="Ogata H."/>
            <person name="La Scola B."/>
            <person name="Audic S."/>
            <person name="Renesto P."/>
            <person name="Blanc G."/>
            <person name="Robert C."/>
            <person name="Fournier P.-E."/>
            <person name="Claverie J.-M."/>
            <person name="Raoult D."/>
        </authorList>
    </citation>
    <scope>NUCLEOTIDE SEQUENCE [LARGE SCALE GENOMIC DNA]</scope>
    <source>
        <strain>RML369-C</strain>
    </source>
</reference>
<keyword id="KW-0808">Transferase</keyword>
<keyword id="KW-0816">Tricarboxylic acid cycle</keyword>
<dbReference type="EC" id="2.3.3.16"/>
<dbReference type="EMBL" id="CP000087">
    <property type="protein sequence ID" value="ABE05406.1"/>
    <property type="molecule type" value="Genomic_DNA"/>
</dbReference>
<dbReference type="RefSeq" id="WP_011477976.1">
    <property type="nucleotide sequence ID" value="NC_007940.1"/>
</dbReference>
<dbReference type="SMR" id="Q1RGV8"/>
<dbReference type="KEGG" id="rbe:RBE_1325"/>
<dbReference type="eggNOG" id="COG0372">
    <property type="taxonomic scope" value="Bacteria"/>
</dbReference>
<dbReference type="HOGENOM" id="CLU_025068_0_0_5"/>
<dbReference type="OrthoDB" id="9800864at2"/>
<dbReference type="UniPathway" id="UPA00223">
    <property type="reaction ID" value="UER00717"/>
</dbReference>
<dbReference type="Proteomes" id="UP000001951">
    <property type="component" value="Chromosome"/>
</dbReference>
<dbReference type="GO" id="GO:0005737">
    <property type="term" value="C:cytoplasm"/>
    <property type="evidence" value="ECO:0007669"/>
    <property type="project" value="InterPro"/>
</dbReference>
<dbReference type="GO" id="GO:0004108">
    <property type="term" value="F:citrate (Si)-synthase activity"/>
    <property type="evidence" value="ECO:0007669"/>
    <property type="project" value="InterPro"/>
</dbReference>
<dbReference type="GO" id="GO:0006099">
    <property type="term" value="P:tricarboxylic acid cycle"/>
    <property type="evidence" value="ECO:0007669"/>
    <property type="project" value="UniProtKB-UniPathway"/>
</dbReference>
<dbReference type="CDD" id="cd06114">
    <property type="entry name" value="EcCS_like"/>
    <property type="match status" value="1"/>
</dbReference>
<dbReference type="FunFam" id="1.10.230.10:FF:000002">
    <property type="entry name" value="Citrate synthase"/>
    <property type="match status" value="1"/>
</dbReference>
<dbReference type="Gene3D" id="2.20.28.60">
    <property type="match status" value="1"/>
</dbReference>
<dbReference type="Gene3D" id="1.10.580.10">
    <property type="entry name" value="Citrate Synthase, domain 1"/>
    <property type="match status" value="1"/>
</dbReference>
<dbReference type="Gene3D" id="1.10.230.10">
    <property type="entry name" value="Cytochrome P450-Terp, domain 2"/>
    <property type="match status" value="1"/>
</dbReference>
<dbReference type="InterPro" id="IPR016142">
    <property type="entry name" value="Citrate_synth-like_lrg_a-sub"/>
</dbReference>
<dbReference type="InterPro" id="IPR016143">
    <property type="entry name" value="Citrate_synth-like_sm_a-sub"/>
</dbReference>
<dbReference type="InterPro" id="IPR002020">
    <property type="entry name" value="Citrate_synthase"/>
</dbReference>
<dbReference type="InterPro" id="IPR019810">
    <property type="entry name" value="Citrate_synthase_AS"/>
</dbReference>
<dbReference type="InterPro" id="IPR024176">
    <property type="entry name" value="Citrate_synthase_bac-typ"/>
</dbReference>
<dbReference type="InterPro" id="IPR036969">
    <property type="entry name" value="Citrate_synthase_sf"/>
</dbReference>
<dbReference type="InterPro" id="IPR010953">
    <property type="entry name" value="Citrate_synthase_typ-I"/>
</dbReference>
<dbReference type="NCBIfam" id="TIGR01798">
    <property type="entry name" value="cit_synth_I"/>
    <property type="match status" value="1"/>
</dbReference>
<dbReference type="NCBIfam" id="NF004126">
    <property type="entry name" value="PRK05614.1"/>
    <property type="match status" value="1"/>
</dbReference>
<dbReference type="PANTHER" id="PTHR42871">
    <property type="entry name" value="CITRATE SYNTHASE"/>
    <property type="match status" value="1"/>
</dbReference>
<dbReference type="PANTHER" id="PTHR42871:SF1">
    <property type="entry name" value="CITRATE SYNTHASE"/>
    <property type="match status" value="1"/>
</dbReference>
<dbReference type="Pfam" id="PF00285">
    <property type="entry name" value="Citrate_synt"/>
    <property type="match status" value="1"/>
</dbReference>
<dbReference type="PIRSF" id="PIRSF001369">
    <property type="entry name" value="Citrate_synth"/>
    <property type="match status" value="1"/>
</dbReference>
<dbReference type="PRINTS" id="PR00143">
    <property type="entry name" value="CITRTSNTHASE"/>
</dbReference>
<dbReference type="SUPFAM" id="SSF48256">
    <property type="entry name" value="Citrate synthase"/>
    <property type="match status" value="1"/>
</dbReference>
<dbReference type="PROSITE" id="PS00480">
    <property type="entry name" value="CITRATE_SYNTHASE"/>
    <property type="match status" value="1"/>
</dbReference>
<organism>
    <name type="scientific">Rickettsia bellii (strain RML369-C)</name>
    <dbReference type="NCBI Taxonomy" id="336407"/>
    <lineage>
        <taxon>Bacteria</taxon>
        <taxon>Pseudomonadati</taxon>
        <taxon>Pseudomonadota</taxon>
        <taxon>Alphaproteobacteria</taxon>
        <taxon>Rickettsiales</taxon>
        <taxon>Rickettsiaceae</taxon>
        <taxon>Rickettsieae</taxon>
        <taxon>Rickettsia</taxon>
        <taxon>belli group</taxon>
    </lineage>
</organism>